<name>GCSH_STACT</name>
<reference key="1">
    <citation type="journal article" date="2009" name="Appl. Environ. Microbiol.">
        <title>Genome analysis of the meat starter culture bacterium Staphylococcus carnosus TM300.</title>
        <authorList>
            <person name="Rosenstein R."/>
            <person name="Nerz C."/>
            <person name="Biswas L."/>
            <person name="Resch A."/>
            <person name="Raddatz G."/>
            <person name="Schuster S.C."/>
            <person name="Goetz F."/>
        </authorList>
    </citation>
    <scope>NUCLEOTIDE SEQUENCE [LARGE SCALE GENOMIC DNA]</scope>
    <source>
        <strain>TM300</strain>
    </source>
</reference>
<keyword id="KW-0450">Lipoyl</keyword>
<keyword id="KW-1185">Reference proteome</keyword>
<sequence length="126" mass="14170">MAVPEELKYSKEHEWVKVEGDTVTIGITEYAQGELGDIVFVELPETEDDIEESESFGSVESVKTVSELYAPVSGSVVEINEELEDSPEFVNESPYEKAWMVKVKLNDESQLDDLLSADQYKEMIGE</sequence>
<comment type="function">
    <text evidence="1">The glycine cleavage system catalyzes the degradation of glycine. The H protein shuttles the methylamine group of glycine from the P protein to the T protein.</text>
</comment>
<comment type="function">
    <text evidence="1">Is also involved in protein lipoylation via its role as an octanoyl/lipoyl carrier protein intermediate.</text>
</comment>
<comment type="cofactor">
    <cofactor evidence="1">
        <name>(R)-lipoate</name>
        <dbReference type="ChEBI" id="CHEBI:83088"/>
    </cofactor>
    <text evidence="1">Binds 1 lipoyl cofactor covalently.</text>
</comment>
<comment type="subunit">
    <text evidence="1">The glycine cleavage system is composed of four proteins: P, T, L and H.</text>
</comment>
<comment type="similarity">
    <text evidence="1">Belongs to the GcvH family.</text>
</comment>
<gene>
    <name evidence="1" type="primary">gcvH</name>
    <name type="ordered locus">Sca_0452</name>
</gene>
<protein>
    <recommendedName>
        <fullName evidence="1">Glycine cleavage system H protein</fullName>
    </recommendedName>
    <alternativeName>
        <fullName evidence="1">Octanoyl/lipoyl carrier protein</fullName>
    </alternativeName>
</protein>
<proteinExistence type="inferred from homology"/>
<evidence type="ECO:0000255" key="1">
    <source>
        <dbReference type="HAMAP-Rule" id="MF_00272"/>
    </source>
</evidence>
<evidence type="ECO:0000255" key="2">
    <source>
        <dbReference type="PROSITE-ProRule" id="PRU01066"/>
    </source>
</evidence>
<organism>
    <name type="scientific">Staphylococcus carnosus (strain TM300)</name>
    <dbReference type="NCBI Taxonomy" id="396513"/>
    <lineage>
        <taxon>Bacteria</taxon>
        <taxon>Bacillati</taxon>
        <taxon>Bacillota</taxon>
        <taxon>Bacilli</taxon>
        <taxon>Bacillales</taxon>
        <taxon>Staphylococcaceae</taxon>
        <taxon>Staphylococcus</taxon>
    </lineage>
</organism>
<dbReference type="EMBL" id="AM295250">
    <property type="protein sequence ID" value="CAL27366.1"/>
    <property type="molecule type" value="Genomic_DNA"/>
</dbReference>
<dbReference type="RefSeq" id="WP_015899710.1">
    <property type="nucleotide sequence ID" value="NC_012121.1"/>
</dbReference>
<dbReference type="SMR" id="B9DJH3"/>
<dbReference type="GeneID" id="93795384"/>
<dbReference type="KEGG" id="sca:SCA_0452"/>
<dbReference type="eggNOG" id="COG0509">
    <property type="taxonomic scope" value="Bacteria"/>
</dbReference>
<dbReference type="HOGENOM" id="CLU_097408_2_2_9"/>
<dbReference type="OrthoDB" id="9796712at2"/>
<dbReference type="BioCyc" id="SCAR396513:SCA_RS02300-MONOMER"/>
<dbReference type="Proteomes" id="UP000000444">
    <property type="component" value="Chromosome"/>
</dbReference>
<dbReference type="GO" id="GO:0005829">
    <property type="term" value="C:cytosol"/>
    <property type="evidence" value="ECO:0007669"/>
    <property type="project" value="TreeGrafter"/>
</dbReference>
<dbReference type="GO" id="GO:0005960">
    <property type="term" value="C:glycine cleavage complex"/>
    <property type="evidence" value="ECO:0007669"/>
    <property type="project" value="InterPro"/>
</dbReference>
<dbReference type="GO" id="GO:0019464">
    <property type="term" value="P:glycine decarboxylation via glycine cleavage system"/>
    <property type="evidence" value="ECO:0007669"/>
    <property type="project" value="UniProtKB-UniRule"/>
</dbReference>
<dbReference type="CDD" id="cd06848">
    <property type="entry name" value="GCS_H"/>
    <property type="match status" value="1"/>
</dbReference>
<dbReference type="Gene3D" id="2.40.50.100">
    <property type="match status" value="1"/>
</dbReference>
<dbReference type="HAMAP" id="MF_00272">
    <property type="entry name" value="GcvH"/>
    <property type="match status" value="1"/>
</dbReference>
<dbReference type="InterPro" id="IPR000089">
    <property type="entry name" value="Biotin_lipoyl"/>
</dbReference>
<dbReference type="InterPro" id="IPR002930">
    <property type="entry name" value="GCV_H"/>
</dbReference>
<dbReference type="InterPro" id="IPR033753">
    <property type="entry name" value="GCV_H/Fam206"/>
</dbReference>
<dbReference type="InterPro" id="IPR017453">
    <property type="entry name" value="GCV_H_sub"/>
</dbReference>
<dbReference type="InterPro" id="IPR011053">
    <property type="entry name" value="Single_hybrid_motif"/>
</dbReference>
<dbReference type="NCBIfam" id="TIGR00527">
    <property type="entry name" value="gcvH"/>
    <property type="match status" value="1"/>
</dbReference>
<dbReference type="NCBIfam" id="NF002270">
    <property type="entry name" value="PRK01202.1"/>
    <property type="match status" value="1"/>
</dbReference>
<dbReference type="PANTHER" id="PTHR11715">
    <property type="entry name" value="GLYCINE CLEAVAGE SYSTEM H PROTEIN"/>
    <property type="match status" value="1"/>
</dbReference>
<dbReference type="PANTHER" id="PTHR11715:SF3">
    <property type="entry name" value="GLYCINE CLEAVAGE SYSTEM H PROTEIN-RELATED"/>
    <property type="match status" value="1"/>
</dbReference>
<dbReference type="Pfam" id="PF01597">
    <property type="entry name" value="GCV_H"/>
    <property type="match status" value="1"/>
</dbReference>
<dbReference type="SUPFAM" id="SSF51230">
    <property type="entry name" value="Single hybrid motif"/>
    <property type="match status" value="1"/>
</dbReference>
<dbReference type="PROSITE" id="PS50968">
    <property type="entry name" value="BIOTINYL_LIPOYL"/>
    <property type="match status" value="1"/>
</dbReference>
<accession>B9DJH3</accession>
<feature type="chain" id="PRO_1000132432" description="Glycine cleavage system H protein">
    <location>
        <begin position="1"/>
        <end position="126"/>
    </location>
</feature>
<feature type="domain" description="Lipoyl-binding" evidence="2">
    <location>
        <begin position="22"/>
        <end position="104"/>
    </location>
</feature>
<feature type="modified residue" description="N6-lipoyllysine" evidence="1">
    <location>
        <position position="63"/>
    </location>
</feature>